<reference key="1">
    <citation type="journal article" date="2004" name="Nature">
        <title>Genome sequence of the Brown Norway rat yields insights into mammalian evolution.</title>
        <authorList>
            <person name="Gibbs R.A."/>
            <person name="Weinstock G.M."/>
            <person name="Metzker M.L."/>
            <person name="Muzny D.M."/>
            <person name="Sodergren E.J."/>
            <person name="Scherer S."/>
            <person name="Scott G."/>
            <person name="Steffen D."/>
            <person name="Worley K.C."/>
            <person name="Burch P.E."/>
            <person name="Okwuonu G."/>
            <person name="Hines S."/>
            <person name="Lewis L."/>
            <person name="Deramo C."/>
            <person name="Delgado O."/>
            <person name="Dugan-Rocha S."/>
            <person name="Miner G."/>
            <person name="Morgan M."/>
            <person name="Hawes A."/>
            <person name="Gill R."/>
            <person name="Holt R.A."/>
            <person name="Adams M.D."/>
            <person name="Amanatides P.G."/>
            <person name="Baden-Tillson H."/>
            <person name="Barnstead M."/>
            <person name="Chin S."/>
            <person name="Evans C.A."/>
            <person name="Ferriera S."/>
            <person name="Fosler C."/>
            <person name="Glodek A."/>
            <person name="Gu Z."/>
            <person name="Jennings D."/>
            <person name="Kraft C.L."/>
            <person name="Nguyen T."/>
            <person name="Pfannkoch C.M."/>
            <person name="Sitter C."/>
            <person name="Sutton G.G."/>
            <person name="Venter J.C."/>
            <person name="Woodage T."/>
            <person name="Smith D."/>
            <person name="Lee H.-M."/>
            <person name="Gustafson E."/>
            <person name="Cahill P."/>
            <person name="Kana A."/>
            <person name="Doucette-Stamm L."/>
            <person name="Weinstock K."/>
            <person name="Fechtel K."/>
            <person name="Weiss R.B."/>
            <person name="Dunn D.M."/>
            <person name="Green E.D."/>
            <person name="Blakesley R.W."/>
            <person name="Bouffard G.G."/>
            <person name="De Jong P.J."/>
            <person name="Osoegawa K."/>
            <person name="Zhu B."/>
            <person name="Marra M."/>
            <person name="Schein J."/>
            <person name="Bosdet I."/>
            <person name="Fjell C."/>
            <person name="Jones S."/>
            <person name="Krzywinski M."/>
            <person name="Mathewson C."/>
            <person name="Siddiqui A."/>
            <person name="Wye N."/>
            <person name="McPherson J."/>
            <person name="Zhao S."/>
            <person name="Fraser C.M."/>
            <person name="Shetty J."/>
            <person name="Shatsman S."/>
            <person name="Geer K."/>
            <person name="Chen Y."/>
            <person name="Abramzon S."/>
            <person name="Nierman W.C."/>
            <person name="Havlak P.H."/>
            <person name="Chen R."/>
            <person name="Durbin K.J."/>
            <person name="Egan A."/>
            <person name="Ren Y."/>
            <person name="Song X.-Z."/>
            <person name="Li B."/>
            <person name="Liu Y."/>
            <person name="Qin X."/>
            <person name="Cawley S."/>
            <person name="Cooney A.J."/>
            <person name="D'Souza L.M."/>
            <person name="Martin K."/>
            <person name="Wu J.Q."/>
            <person name="Gonzalez-Garay M.L."/>
            <person name="Jackson A.R."/>
            <person name="Kalafus K.J."/>
            <person name="McLeod M.P."/>
            <person name="Milosavljevic A."/>
            <person name="Virk D."/>
            <person name="Volkov A."/>
            <person name="Wheeler D.A."/>
            <person name="Zhang Z."/>
            <person name="Bailey J.A."/>
            <person name="Eichler E.E."/>
            <person name="Tuzun E."/>
            <person name="Birney E."/>
            <person name="Mongin E."/>
            <person name="Ureta-Vidal A."/>
            <person name="Woodwark C."/>
            <person name="Zdobnov E."/>
            <person name="Bork P."/>
            <person name="Suyama M."/>
            <person name="Torrents D."/>
            <person name="Alexandersson M."/>
            <person name="Trask B.J."/>
            <person name="Young J.M."/>
            <person name="Huang H."/>
            <person name="Wang H."/>
            <person name="Xing H."/>
            <person name="Daniels S."/>
            <person name="Gietzen D."/>
            <person name="Schmidt J."/>
            <person name="Stevens K."/>
            <person name="Vitt U."/>
            <person name="Wingrove J."/>
            <person name="Camara F."/>
            <person name="Mar Alba M."/>
            <person name="Abril J.F."/>
            <person name="Guigo R."/>
            <person name="Smit A."/>
            <person name="Dubchak I."/>
            <person name="Rubin E.M."/>
            <person name="Couronne O."/>
            <person name="Poliakov A."/>
            <person name="Huebner N."/>
            <person name="Ganten D."/>
            <person name="Goesele C."/>
            <person name="Hummel O."/>
            <person name="Kreitler T."/>
            <person name="Lee Y.-A."/>
            <person name="Monti J."/>
            <person name="Schulz H."/>
            <person name="Zimdahl H."/>
            <person name="Himmelbauer H."/>
            <person name="Lehrach H."/>
            <person name="Jacob H.J."/>
            <person name="Bromberg S."/>
            <person name="Gullings-Handley J."/>
            <person name="Jensen-Seaman M.I."/>
            <person name="Kwitek A.E."/>
            <person name="Lazar J."/>
            <person name="Pasko D."/>
            <person name="Tonellato P.J."/>
            <person name="Twigger S."/>
            <person name="Ponting C.P."/>
            <person name="Duarte J.M."/>
            <person name="Rice S."/>
            <person name="Goodstadt L."/>
            <person name="Beatson S.A."/>
            <person name="Emes R.D."/>
            <person name="Winter E.E."/>
            <person name="Webber C."/>
            <person name="Brandt P."/>
            <person name="Nyakatura G."/>
            <person name="Adetobi M."/>
            <person name="Chiaromonte F."/>
            <person name="Elnitski L."/>
            <person name="Eswara P."/>
            <person name="Hardison R.C."/>
            <person name="Hou M."/>
            <person name="Kolbe D."/>
            <person name="Makova K."/>
            <person name="Miller W."/>
            <person name="Nekrutenko A."/>
            <person name="Riemer C."/>
            <person name="Schwartz S."/>
            <person name="Taylor J."/>
            <person name="Yang S."/>
            <person name="Zhang Y."/>
            <person name="Lindpaintner K."/>
            <person name="Andrews T.D."/>
            <person name="Caccamo M."/>
            <person name="Clamp M."/>
            <person name="Clarke L."/>
            <person name="Curwen V."/>
            <person name="Durbin R.M."/>
            <person name="Eyras E."/>
            <person name="Searle S.M."/>
            <person name="Cooper G.M."/>
            <person name="Batzoglou S."/>
            <person name="Brudno M."/>
            <person name="Sidow A."/>
            <person name="Stone E.A."/>
            <person name="Payseur B.A."/>
            <person name="Bourque G."/>
            <person name="Lopez-Otin C."/>
            <person name="Puente X.S."/>
            <person name="Chakrabarti K."/>
            <person name="Chatterji S."/>
            <person name="Dewey C."/>
            <person name="Pachter L."/>
            <person name="Bray N."/>
            <person name="Yap V.B."/>
            <person name="Caspi A."/>
            <person name="Tesler G."/>
            <person name="Pevzner P.A."/>
            <person name="Haussler D."/>
            <person name="Roskin K.M."/>
            <person name="Baertsch R."/>
            <person name="Clawson H."/>
            <person name="Furey T.S."/>
            <person name="Hinrichs A.S."/>
            <person name="Karolchik D."/>
            <person name="Kent W.J."/>
            <person name="Rosenbloom K.R."/>
            <person name="Trumbower H."/>
            <person name="Weirauch M."/>
            <person name="Cooper D.N."/>
            <person name="Stenson P.D."/>
            <person name="Ma B."/>
            <person name="Brent M."/>
            <person name="Arumugam M."/>
            <person name="Shteynberg D."/>
            <person name="Copley R.R."/>
            <person name="Taylor M.S."/>
            <person name="Riethman H."/>
            <person name="Mudunuri U."/>
            <person name="Peterson J."/>
            <person name="Guyer M."/>
            <person name="Felsenfeld A."/>
            <person name="Old S."/>
            <person name="Mockrin S."/>
            <person name="Collins F.S."/>
        </authorList>
    </citation>
    <scope>NUCLEOTIDE SEQUENCE [LARGE SCALE GENOMIC DNA]</scope>
    <source>
        <strain>Brown Norway</strain>
    </source>
</reference>
<proteinExistence type="inferred from homology"/>
<accession>F1LPQ2</accession>
<dbReference type="EC" id="5.6.2.4" evidence="1"/>
<dbReference type="SMR" id="F1LPQ2"/>
<dbReference type="FunCoup" id="F1LPQ2">
    <property type="interactions" value="3368"/>
</dbReference>
<dbReference type="STRING" id="10116.ENSRNOP00000053848"/>
<dbReference type="GlyGen" id="F1LPQ2">
    <property type="glycosylation" value="1 site"/>
</dbReference>
<dbReference type="iPTMnet" id="F1LPQ2"/>
<dbReference type="PhosphoSitePlus" id="F1LPQ2"/>
<dbReference type="jPOST" id="F1LPQ2"/>
<dbReference type="PaxDb" id="10116-ENSRNOP00000053848"/>
<dbReference type="UCSC" id="RGD:1307995">
    <property type="organism name" value="rat"/>
</dbReference>
<dbReference type="AGR" id="RGD:1307995"/>
<dbReference type="RGD" id="1307995">
    <property type="gene designation" value="Ascc3"/>
</dbReference>
<dbReference type="eggNOG" id="KOG0952">
    <property type="taxonomic scope" value="Eukaryota"/>
</dbReference>
<dbReference type="InParanoid" id="F1LPQ2"/>
<dbReference type="TreeFam" id="TF105778"/>
<dbReference type="PRO" id="PR:F1LPQ2"/>
<dbReference type="Proteomes" id="UP000002494">
    <property type="component" value="Unplaced"/>
</dbReference>
<dbReference type="GO" id="GO:0005829">
    <property type="term" value="C:cytosol"/>
    <property type="evidence" value="ECO:0000250"/>
    <property type="project" value="UniProtKB"/>
</dbReference>
<dbReference type="GO" id="GO:0022626">
    <property type="term" value="C:cytosolic ribosome"/>
    <property type="evidence" value="ECO:0000266"/>
    <property type="project" value="RGD"/>
</dbReference>
<dbReference type="GO" id="GO:1990391">
    <property type="term" value="C:DNA repair complex"/>
    <property type="evidence" value="ECO:0000266"/>
    <property type="project" value="RGD"/>
</dbReference>
<dbReference type="GO" id="GO:0016607">
    <property type="term" value="C:nuclear speck"/>
    <property type="evidence" value="ECO:0007669"/>
    <property type="project" value="UniProtKB-SubCell"/>
</dbReference>
<dbReference type="GO" id="GO:0005634">
    <property type="term" value="C:nucleus"/>
    <property type="evidence" value="ECO:0000250"/>
    <property type="project" value="UniProtKB"/>
</dbReference>
<dbReference type="GO" id="GO:0180022">
    <property type="term" value="C:RQC-trigger complex"/>
    <property type="evidence" value="ECO:0000266"/>
    <property type="project" value="RGD"/>
</dbReference>
<dbReference type="GO" id="GO:0043138">
    <property type="term" value="F:3'-5' DNA helicase activity"/>
    <property type="evidence" value="ECO:0000250"/>
    <property type="project" value="UniProtKB"/>
</dbReference>
<dbReference type="GO" id="GO:0005524">
    <property type="term" value="F:ATP binding"/>
    <property type="evidence" value="ECO:0007669"/>
    <property type="project" value="UniProtKB-KW"/>
</dbReference>
<dbReference type="GO" id="GO:0016887">
    <property type="term" value="F:ATP hydrolysis activity"/>
    <property type="evidence" value="ECO:0000250"/>
    <property type="project" value="UniProtKB"/>
</dbReference>
<dbReference type="GO" id="GO:0003676">
    <property type="term" value="F:nucleic acid binding"/>
    <property type="evidence" value="ECO:0007669"/>
    <property type="project" value="InterPro"/>
</dbReference>
<dbReference type="GO" id="GO:0006307">
    <property type="term" value="P:DNA alkylation repair"/>
    <property type="evidence" value="ECO:0000250"/>
    <property type="project" value="UniProtKB"/>
</dbReference>
<dbReference type="GO" id="GO:0072344">
    <property type="term" value="P:rescue of stalled ribosome"/>
    <property type="evidence" value="ECO:0000250"/>
    <property type="project" value="UniProtKB"/>
</dbReference>
<dbReference type="GO" id="GO:0032790">
    <property type="term" value="P:ribosome disassembly"/>
    <property type="evidence" value="ECO:0000250"/>
    <property type="project" value="UniProtKB"/>
</dbReference>
<dbReference type="GO" id="GO:1990116">
    <property type="term" value="P:ribosome-associated ubiquitin-dependent protein catabolic process"/>
    <property type="evidence" value="ECO:0000250"/>
    <property type="project" value="UniProtKB"/>
</dbReference>
<dbReference type="CDD" id="cd18020">
    <property type="entry name" value="DEXHc_ASCC3_1"/>
    <property type="match status" value="1"/>
</dbReference>
<dbReference type="CDD" id="cd18022">
    <property type="entry name" value="DEXHc_ASCC3_2"/>
    <property type="match status" value="1"/>
</dbReference>
<dbReference type="CDD" id="cd18795">
    <property type="entry name" value="SF2_C_Ski2"/>
    <property type="match status" value="2"/>
</dbReference>
<dbReference type="FunFam" id="3.40.50.300:FF:000198">
    <property type="entry name" value="Activating signal cointegrator 1 complex subunit"/>
    <property type="match status" value="1"/>
</dbReference>
<dbReference type="FunFam" id="1.10.3380.10:FF:000002">
    <property type="entry name" value="Activating signal cointegrator 1 complex subunit 3"/>
    <property type="match status" value="1"/>
</dbReference>
<dbReference type="FunFam" id="3.40.50.300:FF:000231">
    <property type="entry name" value="Activating signal cointegrator 1 complex subunit 3"/>
    <property type="match status" value="1"/>
</dbReference>
<dbReference type="FunFam" id="1.10.150.20:FF:000028">
    <property type="entry name" value="activating signal cointegrator 1 complex subunit 3"/>
    <property type="match status" value="1"/>
</dbReference>
<dbReference type="FunFam" id="2.60.40.150:FF:000113">
    <property type="entry name" value="activating signal cointegrator 1 complex subunit 3"/>
    <property type="match status" value="1"/>
</dbReference>
<dbReference type="FunFam" id="2.60.40.150:FF:000004">
    <property type="entry name" value="RNA helicase, activating signal cointegrator 1"/>
    <property type="match status" value="1"/>
</dbReference>
<dbReference type="FunFam" id="3.40.50.300:FF:000102">
    <property type="entry name" value="RNA helicase, activating signal cointegrator 1"/>
    <property type="match status" value="1"/>
</dbReference>
<dbReference type="FunFam" id="1.10.10.10:FF:000012">
    <property type="entry name" value="U5 small nuclear ribonucleoprotein helicase"/>
    <property type="match status" value="1"/>
</dbReference>
<dbReference type="FunFam" id="1.10.10.10:FF:000024">
    <property type="entry name" value="U5 small nuclear ribonucleoprotein helicase"/>
    <property type="match status" value="1"/>
</dbReference>
<dbReference type="FunFam" id="1.10.3380.10:FF:000001">
    <property type="entry name" value="U5 small nuclear ribonucleoprotein helicase"/>
    <property type="match status" value="1"/>
</dbReference>
<dbReference type="FunFam" id="3.40.50.300:FF:000062">
    <property type="entry name" value="U5 small nuclear ribonucleoprotein helicase"/>
    <property type="match status" value="1"/>
</dbReference>
<dbReference type="Gene3D" id="1.10.150.20">
    <property type="entry name" value="5' to 3' exonuclease, C-terminal subdomain"/>
    <property type="match status" value="1"/>
</dbReference>
<dbReference type="Gene3D" id="2.60.40.150">
    <property type="entry name" value="C2 domain"/>
    <property type="match status" value="2"/>
</dbReference>
<dbReference type="Gene3D" id="3.40.50.300">
    <property type="entry name" value="P-loop containing nucleotide triphosphate hydrolases"/>
    <property type="match status" value="4"/>
</dbReference>
<dbReference type="Gene3D" id="1.10.3380.10">
    <property type="entry name" value="Sec63 N-terminal domain-like domain"/>
    <property type="match status" value="2"/>
</dbReference>
<dbReference type="Gene3D" id="1.10.10.10">
    <property type="entry name" value="Winged helix-like DNA-binding domain superfamily/Winged helix DNA-binding domain"/>
    <property type="match status" value="2"/>
</dbReference>
<dbReference type="InterPro" id="IPR003593">
    <property type="entry name" value="AAA+_ATPase"/>
</dbReference>
<dbReference type="InterPro" id="IPR035892">
    <property type="entry name" value="C2_domain_sf"/>
</dbReference>
<dbReference type="InterPro" id="IPR011545">
    <property type="entry name" value="DEAD/DEAH_box_helicase_dom"/>
</dbReference>
<dbReference type="InterPro" id="IPR050474">
    <property type="entry name" value="Hel308_SKI2-like"/>
</dbReference>
<dbReference type="InterPro" id="IPR014001">
    <property type="entry name" value="Helicase_ATP-bd"/>
</dbReference>
<dbReference type="InterPro" id="IPR001650">
    <property type="entry name" value="Helicase_C-like"/>
</dbReference>
<dbReference type="InterPro" id="IPR014756">
    <property type="entry name" value="Ig_E-set"/>
</dbReference>
<dbReference type="InterPro" id="IPR027417">
    <property type="entry name" value="P-loop_NTPase"/>
</dbReference>
<dbReference type="InterPro" id="IPR004179">
    <property type="entry name" value="Sec63-dom"/>
</dbReference>
<dbReference type="InterPro" id="IPR036388">
    <property type="entry name" value="WH-like_DNA-bd_sf"/>
</dbReference>
<dbReference type="InterPro" id="IPR036390">
    <property type="entry name" value="WH_DNA-bd_sf"/>
</dbReference>
<dbReference type="PANTHER" id="PTHR47961:SF13">
    <property type="entry name" value="ACTIVATING SIGNAL COINTEGRATOR 1 COMPLEX SUBUNIT 3"/>
    <property type="match status" value="1"/>
</dbReference>
<dbReference type="PANTHER" id="PTHR47961">
    <property type="entry name" value="DNA POLYMERASE THETA, PUTATIVE (AFU_ORTHOLOGUE AFUA_1G05260)-RELATED"/>
    <property type="match status" value="1"/>
</dbReference>
<dbReference type="Pfam" id="PF00270">
    <property type="entry name" value="DEAD"/>
    <property type="match status" value="2"/>
</dbReference>
<dbReference type="Pfam" id="PF00271">
    <property type="entry name" value="Helicase_C"/>
    <property type="match status" value="2"/>
</dbReference>
<dbReference type="Pfam" id="PF02889">
    <property type="entry name" value="Sec63"/>
    <property type="match status" value="2"/>
</dbReference>
<dbReference type="Pfam" id="PF23445">
    <property type="entry name" value="SNRNP200_wHTH"/>
    <property type="match status" value="2"/>
</dbReference>
<dbReference type="PIRSF" id="PIRSF039073">
    <property type="entry name" value="BRR2"/>
    <property type="match status" value="1"/>
</dbReference>
<dbReference type="SMART" id="SM00382">
    <property type="entry name" value="AAA"/>
    <property type="match status" value="2"/>
</dbReference>
<dbReference type="SMART" id="SM00487">
    <property type="entry name" value="DEXDc"/>
    <property type="match status" value="2"/>
</dbReference>
<dbReference type="SMART" id="SM00490">
    <property type="entry name" value="HELICc"/>
    <property type="match status" value="2"/>
</dbReference>
<dbReference type="SMART" id="SM00973">
    <property type="entry name" value="Sec63"/>
    <property type="match status" value="2"/>
</dbReference>
<dbReference type="SUPFAM" id="SSF81296">
    <property type="entry name" value="E set domains"/>
    <property type="match status" value="1"/>
</dbReference>
<dbReference type="SUPFAM" id="SSF52540">
    <property type="entry name" value="P-loop containing nucleoside triphosphate hydrolases"/>
    <property type="match status" value="3"/>
</dbReference>
<dbReference type="SUPFAM" id="SSF158702">
    <property type="entry name" value="Sec63 N-terminal domain-like"/>
    <property type="match status" value="2"/>
</dbReference>
<dbReference type="SUPFAM" id="SSF46785">
    <property type="entry name" value="Winged helix' DNA-binding domain"/>
    <property type="match status" value="2"/>
</dbReference>
<dbReference type="PROSITE" id="PS51192">
    <property type="entry name" value="HELICASE_ATP_BIND_1"/>
    <property type="match status" value="2"/>
</dbReference>
<dbReference type="PROSITE" id="PS51194">
    <property type="entry name" value="HELICASE_CTER"/>
    <property type="match status" value="2"/>
</dbReference>
<name>ASCC3_RAT</name>
<keyword id="KW-0007">Acetylation</keyword>
<keyword id="KW-0067">ATP-binding</keyword>
<keyword id="KW-0175">Coiled coil</keyword>
<keyword id="KW-0963">Cytoplasm</keyword>
<keyword id="KW-0227">DNA damage</keyword>
<keyword id="KW-0234">DNA repair</keyword>
<keyword id="KW-0347">Helicase</keyword>
<keyword id="KW-0378">Hydrolase</keyword>
<keyword id="KW-0413">Isomerase</keyword>
<keyword id="KW-0547">Nucleotide-binding</keyword>
<keyword id="KW-0539">Nucleus</keyword>
<keyword id="KW-0597">Phosphoprotein</keyword>
<keyword id="KW-1185">Reference proteome</keyword>
<keyword id="KW-0677">Repeat</keyword>
<protein>
    <recommendedName>
        <fullName>Activating signal cointegrator 1 complex subunit 3</fullName>
        <ecNumber evidence="1">5.6.2.4</ecNumber>
    </recommendedName>
</protein>
<evidence type="ECO:0000250" key="1">
    <source>
        <dbReference type="UniProtKB" id="Q8N3C0"/>
    </source>
</evidence>
<evidence type="ECO:0000255" key="2"/>
<evidence type="ECO:0000255" key="3">
    <source>
        <dbReference type="PROSITE-ProRule" id="PRU00541"/>
    </source>
</evidence>
<evidence type="ECO:0000255" key="4">
    <source>
        <dbReference type="PROSITE-ProRule" id="PRU00542"/>
    </source>
</evidence>
<evidence type="ECO:0000305" key="5"/>
<sequence length="2197" mass="250220">MALPRLTGALRSFSNVTKQDNYNEEVADLKLKRSKLHEQALDFGLSWKKIVKFLNEKLEKNKMQTINEDLKDILQAAKQIVGTDNGNEAIESGAAFLFMTFHMTDSVGYTETKAIRQMFGPFPSSSATSACNATSRIISHFSQDDLTALVQATENQCNDRVVFGRNLAFSFDMHDLDHFDELPVNGEAQKTISLDYKKFLNEQFQEPYTPELKPVEKSNGSLLWCEVEKYLNATLKEMTEAPRVEDLCCTLYDMLASAKSGDELQDELFELLGPGGLDLIEKLLQNRITIVDRFLNSSSDHKFQVLQDNCKKILGENAKPNYGCQVTIQSEQEKQLMKQYRREEKRIARREKKAGEDGEVSGEGLLPFDPKELRLQREHALLNARSAPILGRQRDTEVEKIRYPHVYDSQAAARETSAFIAGAKMILPEGIQRENTKLYEEVRIPYSEPMPVGFEEKPVYIQDLDEVGQLAFKGMKRLNRIQSIVFDTAYNTNENMLICAPTGAGKTNIAMLTVLHEIRQHFHQGVLKKNEFKIVYVAPMKALAAEMTNYFSKRLEPLGIVVKELTGDMQLSKSEILRTQMLVTTPEKWDVVTRKSVGDVALSQIVKLLILDEVHLLHEDRGPVLESIVARTLRQVESTQSMIRILGLSATLPNYLDVATFLHVNPYIGLFYFDGRFRPVPLGQTFLGIKSANKMQQLNNMDEVCYESVLKQVKAGHQVMVFVHARNATVRTAMSLIERAKNSGQISCFLPTQGPEYGHALKQVQKSRNKQVRELFSDGFSIHHAGMLRQDRNLVENLFSNGHIKVLVCTATLAWGVNLPAHAVIIKGTQIYAAKRGSFVDLGILDVMQIFGRAGRPQFDKFGEGIIITTHDKLSHYLSLLTQQNPIESQFLESLADNLNAEIALGTVTNVEEAVKWMSYTYLYVRMRANPLAYGISHKAYQMDPTLRKHREQLLIEVGQKLDKARMIRFEERTGYFSSTDLGRTASHYYIKYNTIETFNELFDAHKTEGDIFAIVSKAEEFDQIKVREEEIEELDALLNNFCELSAPGGVENSYGKINILLQTYISRGEMDSFSLISDSAYVAQNAARIVRALFEIALRKRWPTMTYRLLNLSKVIDKRLWGWASPLRQFSVLPPHILTRLEEKNLTVDKLKDMRKDEIGHILHHVNIGLKVKQCVHQIPSVTMEASIQPITRTVLRVSLNIYPDFSWNDQVHGTVGEPWWIWVEDPTNDHIYHSEYFLALKKQVINKEAQLLVFTIPIFEPLPSQYYIRAVSDRWLGAEAVCIINFQHLILPERHPPHTELLDLQPLPVTALGCKAYEALYNFSHFNPVQTQIFHTLYHTDCNVLLGAPTGSGKTVAAELAIFRVFNKYPTSKAVYIAPLKALVRERMDDWKIRIEEKLGKKVIELTGDVTPDMKSIAKADLIVTTPEKWDGVSRSWQNRSYVQQVNILIIDEIHLLGEERGPVLEVIVSRTNFISSHTEKPVRIVGLSTALANARDLADWLNIKQMGLFNFRPSVRPVPLEVHIQGFPGQHYCPRMASMNKPAFQESHTHCPDRPCLLLPERMLSSMTKLELIAFLATEEDPKQWLNMDEQEMENIIATVRDSNLKLTLAFGIGMHHAGLHERDRKTVEELFVNCKVQVLIATSTLAWGVNFPAHLVIIKGTEYYDGKTRRYVDFPITDVLQMMGRAGRPQFDDQGKAVILVHDIKKDFYKKFLYEPFPVESSLLGVLSDHLNAEIAGGTITSKQDALDYITWTYFFRRLIMNPSYYNLGDVSQDAINKFLSHLIGQSLVELELSHCIEVGEDNRSIEPLTCGRIASYYYLKHKTVKMFKDRLKPECSTEELLSILSDAEEYTDLPVRHNEDHTNNELAKCLPIELNPHSFDSPHTKAHLLLQAHLSRAMLPCPDYDTDTKTVLDQALRVCQAMLDVAASQGWLVTTLNITHLIQMVIQGRWLKDSSLLTIPNIEQHHLHLFRKWKPPVKGPHAKCRTSIECLPELIHACEGKEHVFSSMVEKELQPAKTKQAWNFLSHLPVINVGISVKGSWDDSVEGHNELSISTLTADKRDENTWIKLHADQQYVLQVSLQRVHFEFHKVKHESHAVTPRFPKLKDEGWFLILGEVDKRELVAVKRVGFVRTHHEASISFFTPEAPGRYIFTLYLMSDCYLGLDQQYDIFLNVTKADISTQINTEVPDVST</sequence>
<comment type="function">
    <text evidence="1">ATPase involved both in DNA repair and rescue of stalled ribosomes. 3'-5' DNA helicase involved in repair of alkylated DNA: promotes DNA unwinding to generate single-stranded substrate needed for ALKBH3, enabling ALKBH3 to process alkylated N3-methylcytosine (3mC) within double-stranded regions. Also involved in activation of the ribosome quality control (RQC) pathway, a pathway that degrades nascent peptide chains during problematic translation. Drives the splitting of stalled ribosomes that are ubiquitinated in a ZNF598-dependent manner, as part of the ribosome quality control trigger (RQT) complex. Part of the ASC-1 complex that enhances NF-kappa-B, SRF and AP1 transactivation.</text>
</comment>
<comment type="catalytic activity">
    <reaction evidence="1">
        <text>Couples ATP hydrolysis with the unwinding of duplex DNA by translocating in the 3'-5' direction.</text>
        <dbReference type="EC" id="5.6.2.4"/>
    </reaction>
</comment>
<comment type="catalytic activity">
    <reaction evidence="1">
        <text>ATP + H2O = ADP + phosphate + H(+)</text>
        <dbReference type="Rhea" id="RHEA:13065"/>
        <dbReference type="ChEBI" id="CHEBI:15377"/>
        <dbReference type="ChEBI" id="CHEBI:15378"/>
        <dbReference type="ChEBI" id="CHEBI:30616"/>
        <dbReference type="ChEBI" id="CHEBI:43474"/>
        <dbReference type="ChEBI" id="CHEBI:456216"/>
        <dbReference type="EC" id="5.6.2.4"/>
    </reaction>
</comment>
<comment type="subunit">
    <text evidence="1">Identified in the ASCC complex that contains ASCC1, ASCC2 and ASCC3. Functions as a scaffolding subunit that interacts directly with both ASCC1 and ASCC2. Interacts directly with ALKBH3, and thereby recruits ALKBH3 to the ASCC complex. Part of the ASC-1/TRIP4 complex, that contains TRIP4, ASCC1, ASCC2 and ASCC3. Part of the RQT (ribosome quality control trigger) complex, that contains ASCC2, ASCC3 and TRIP4. Associates with ribosomes; recruited to collided ribosomes. Interacts with ZCCHC4. Interacts with ZNF598. Interacts with RPS3.</text>
</comment>
<comment type="subcellular location">
    <subcellularLocation>
        <location evidence="1">Nucleus</location>
    </subcellularLocation>
    <subcellularLocation>
        <location evidence="1">Nucleus speckle</location>
    </subcellularLocation>
    <subcellularLocation>
        <location evidence="1">Cytoplasm</location>
        <location evidence="1">Cytosol</location>
    </subcellularLocation>
    <text evidence="1">Colocalizes with ALKBH3 and ASCC2 in nuclear foci when cells have been exposed to alkylating agents that cause DNA damage.</text>
</comment>
<comment type="similarity">
    <text evidence="5">Belongs to the helicase family.</text>
</comment>
<gene>
    <name type="primary">Ascc3</name>
</gene>
<organism>
    <name type="scientific">Rattus norvegicus</name>
    <name type="common">Rat</name>
    <dbReference type="NCBI Taxonomy" id="10116"/>
    <lineage>
        <taxon>Eukaryota</taxon>
        <taxon>Metazoa</taxon>
        <taxon>Chordata</taxon>
        <taxon>Craniata</taxon>
        <taxon>Vertebrata</taxon>
        <taxon>Euteleostomi</taxon>
        <taxon>Mammalia</taxon>
        <taxon>Eutheria</taxon>
        <taxon>Euarchontoglires</taxon>
        <taxon>Glires</taxon>
        <taxon>Rodentia</taxon>
        <taxon>Myomorpha</taxon>
        <taxon>Muroidea</taxon>
        <taxon>Muridae</taxon>
        <taxon>Murinae</taxon>
        <taxon>Rattus</taxon>
    </lineage>
</organism>
<feature type="chain" id="PRO_0000416916" description="Activating signal cointegrator 1 complex subunit 3">
    <location>
        <begin position="1"/>
        <end position="2197"/>
    </location>
</feature>
<feature type="domain" description="Helicase ATP-binding 1" evidence="3">
    <location>
        <begin position="487"/>
        <end position="670"/>
    </location>
</feature>
<feature type="domain" description="Helicase C-terminal 1" evidence="4">
    <location>
        <begin position="697"/>
        <end position="915"/>
    </location>
</feature>
<feature type="domain" description="SEC63 1">
    <location>
        <begin position="979"/>
        <end position="1288"/>
    </location>
</feature>
<feature type="domain" description="Helicase ATP-binding 2" evidence="3">
    <location>
        <begin position="1337"/>
        <end position="1512"/>
    </location>
</feature>
<feature type="domain" description="Helicase C-terminal 2" evidence="4">
    <location>
        <begin position="1565"/>
        <end position="1739"/>
    </location>
</feature>
<feature type="domain" description="SEC63 2">
    <location>
        <begin position="1812"/>
        <end position="2175"/>
    </location>
</feature>
<feature type="coiled-coil region" evidence="2">
    <location>
        <begin position="18"/>
        <end position="80"/>
    </location>
</feature>
<feature type="coiled-coil region" evidence="2">
    <location>
        <begin position="328"/>
        <end position="356"/>
    </location>
</feature>
<feature type="short sequence motif" description="DEVH box">
    <location>
        <begin position="612"/>
        <end position="615"/>
    </location>
</feature>
<feature type="short sequence motif" description="DEIH box">
    <location>
        <begin position="1454"/>
        <end position="1457"/>
    </location>
</feature>
<feature type="binding site" evidence="3">
    <location>
        <begin position="500"/>
        <end position="507"/>
    </location>
    <ligand>
        <name>ATP</name>
        <dbReference type="ChEBI" id="CHEBI:30616"/>
    </ligand>
</feature>
<feature type="binding site" evidence="3">
    <location>
        <begin position="1350"/>
        <end position="1357"/>
    </location>
    <ligand>
        <name>ATP</name>
        <dbReference type="ChEBI" id="CHEBI:30616"/>
    </ligand>
</feature>
<feature type="modified residue" description="Phosphoserine" evidence="1">
    <location>
        <position position="12"/>
    </location>
</feature>
<feature type="modified residue" description="N6-acetyllysine" evidence="1">
    <location>
        <position position="573"/>
    </location>
</feature>